<evidence type="ECO:0000250" key="1"/>
<evidence type="ECO:0000250" key="2">
    <source>
        <dbReference type="UniProtKB" id="Q9NR30"/>
    </source>
</evidence>
<evidence type="ECO:0000255" key="3">
    <source>
        <dbReference type="PROSITE-ProRule" id="PRU00541"/>
    </source>
</evidence>
<evidence type="ECO:0000255" key="4">
    <source>
        <dbReference type="PROSITE-ProRule" id="PRU00542"/>
    </source>
</evidence>
<evidence type="ECO:0000255" key="5">
    <source>
        <dbReference type="PROSITE-ProRule" id="PRU00552"/>
    </source>
</evidence>
<evidence type="ECO:0000256" key="6">
    <source>
        <dbReference type="SAM" id="MobiDB-lite"/>
    </source>
</evidence>
<evidence type="ECO:0000269" key="7">
    <source>
    </source>
</evidence>
<evidence type="ECO:0000269" key="8">
    <source>
    </source>
</evidence>
<evidence type="ECO:0000269" key="9">
    <source>
    </source>
</evidence>
<evidence type="ECO:0000303" key="10">
    <source>
    </source>
</evidence>
<evidence type="ECO:0000305" key="11"/>
<evidence type="ECO:0007744" key="12">
    <source>
    </source>
</evidence>
<evidence type="ECO:0007744" key="13">
    <source>
    </source>
</evidence>
<evidence type="ECO:0007744" key="14">
    <source>
    </source>
</evidence>
<evidence type="ECO:0007744" key="15">
    <source>
    </source>
</evidence>
<evidence type="ECO:0007744" key="16">
    <source>
    </source>
</evidence>
<evidence type="ECO:0007829" key="17">
    <source>
        <dbReference type="PDB" id="3ZIN"/>
    </source>
</evidence>
<name>DDX21_MOUSE</name>
<sequence length="851" mass="93551">MPGKLRSGAKLGSDGAEESMETLPKPSEKKTRKEKTKSKTEEATEGMEEAVSSKAKKTNKKGPSEDDVDPPKSRKAKKQEEEPQDDTASTSKTSKKKKEPLEKQADSETKEIITEEPSEEEADMPKPKKMKKGKEANGDAGEKSPKLKNGLSQPSEEEADIPKPKKMKKGKEANGDAGEKSPKLKNGLSQPSEEEVDIPKPKKMKKGKEASGDAGEKSPRLKDGLSQPSEPKSNSSDAPGEESSSETEKEIPVEQKEGAFSNFPISEETVKLLKARGVNFLFPIQAKTFHHVYSGKDLIAQARTGTGKTFSFAIPLIEKLQGGLQERKRGRAPQVLVLAPTRELANQVSKDFSDITKKLSVACFYGGTPYGGQIERMRSGIDILVGTPGRIKDHLQNGKLDLTKLKHVVLDEVDQMLDMGFADQVEEILCVAYKKDSEDNPQTLLFSATCPHWVFNVAKKYMKSTYEQVDLIGKKTQKAAITVEHLAIKCHWTERAAVIGDVIRVYSGHQGRTIIFCETKKDAQELSQNTCIKQDAQSLHGDIPQKQREITLKGFRNGNFGVLVATNVAARGLDIPEVDLVVQSCPPKDVESYIHRSGRTGRAGRTGVCICFYQNKEEYQLAQVEQKAGIKFKRIGVPSATEIIKASSKDAIRLLDSVPPTAISHFKQSAEKLIEEKGAVEALAAALAHISGATSVDQRSLINSQAGFVTMILRCSIEMPNISYAWKELKEQLGESIDAKVKGMVFLKGKLGVCFDVRTEAVTEIQEKWHDSRRWQLTVATEQPELEGPPDGYRGRMGQRDGSRGAFRGQRGGSRNFRGQGQRGGSRNFRGQRPGGGNRGQKRSFSKAFGQ</sequence>
<protein>
    <recommendedName>
        <fullName evidence="11">Nucleolar RNA helicase 2</fullName>
        <ecNumber evidence="2">3.6.4.13</ecNumber>
    </recommendedName>
    <alternativeName>
        <fullName>DEAD box protein 21</fullName>
    </alternativeName>
    <alternativeName>
        <fullName>Gu-alpha</fullName>
    </alternativeName>
    <alternativeName>
        <fullName>Nucleolar RNA helicase Gu</fullName>
    </alternativeName>
    <alternativeName>
        <fullName>Nucleolar RNA helicase II</fullName>
    </alternativeName>
    <alternativeName>
        <fullName>RH II/Gu</fullName>
    </alternativeName>
</protein>
<gene>
    <name type="primary">Ddx21</name>
</gene>
<organism>
    <name type="scientific">Mus musculus</name>
    <name type="common">Mouse</name>
    <dbReference type="NCBI Taxonomy" id="10090"/>
    <lineage>
        <taxon>Eukaryota</taxon>
        <taxon>Metazoa</taxon>
        <taxon>Chordata</taxon>
        <taxon>Craniata</taxon>
        <taxon>Vertebrata</taxon>
        <taxon>Euteleostomi</taxon>
        <taxon>Mammalia</taxon>
        <taxon>Eutheria</taxon>
        <taxon>Euarchontoglires</taxon>
        <taxon>Glires</taxon>
        <taxon>Rodentia</taxon>
        <taxon>Myomorpha</taxon>
        <taxon>Muroidea</taxon>
        <taxon>Muridae</taxon>
        <taxon>Murinae</taxon>
        <taxon>Mus</taxon>
        <taxon>Mus</taxon>
    </lineage>
</organism>
<keyword id="KW-0002">3D-structure</keyword>
<keyword id="KW-0007">Acetylation</keyword>
<keyword id="KW-0051">Antiviral defense</keyword>
<keyword id="KW-0067">ATP-binding</keyword>
<keyword id="KW-0963">Cytoplasm</keyword>
<keyword id="KW-0347">Helicase</keyword>
<keyword id="KW-0378">Hydrolase</keyword>
<keyword id="KW-0391">Immunity</keyword>
<keyword id="KW-0399">Innate immunity</keyword>
<keyword id="KW-0496">Mitochondrion</keyword>
<keyword id="KW-0547">Nucleotide-binding</keyword>
<keyword id="KW-0539">Nucleus</keyword>
<keyword id="KW-0597">Phosphoprotein</keyword>
<keyword id="KW-1185">Reference proteome</keyword>
<keyword id="KW-0677">Repeat</keyword>
<keyword id="KW-0694">RNA-binding</keyword>
<keyword id="KW-0698">rRNA processing</keyword>
<keyword id="KW-0804">Transcription</keyword>
<proteinExistence type="evidence at protein level"/>
<reference key="1">
    <citation type="journal article" date="2000" name="Genomics">
        <title>Mouse RNA helicase II/Gu: cDNA and genomic sequences, chromosomal localization, and regulation of expression.</title>
        <authorList>
            <person name="Valdez B.C."/>
            <person name="Wang W."/>
        </authorList>
    </citation>
    <scope>NUCLEOTIDE SEQUENCE [GENOMIC DNA / MRNA]</scope>
    <scope>TISSUE SPECIFICITY</scope>
    <source>
        <strain>129/SvJ</strain>
    </source>
</reference>
<reference key="2">
    <citation type="submission" date="2001-04" db="UniProtKB">
        <authorList>
            <person name="Valdez B.C."/>
        </authorList>
    </citation>
    <scope>SEQUENCE REVISION TO N-TERMINUS</scope>
</reference>
<reference key="3">
    <citation type="journal article" date="2005" name="Science">
        <title>The transcriptional landscape of the mammalian genome.</title>
        <authorList>
            <person name="Carninci P."/>
            <person name="Kasukawa T."/>
            <person name="Katayama S."/>
            <person name="Gough J."/>
            <person name="Frith M.C."/>
            <person name="Maeda N."/>
            <person name="Oyama R."/>
            <person name="Ravasi T."/>
            <person name="Lenhard B."/>
            <person name="Wells C."/>
            <person name="Kodzius R."/>
            <person name="Shimokawa K."/>
            <person name="Bajic V.B."/>
            <person name="Brenner S.E."/>
            <person name="Batalov S."/>
            <person name="Forrest A.R."/>
            <person name="Zavolan M."/>
            <person name="Davis M.J."/>
            <person name="Wilming L.G."/>
            <person name="Aidinis V."/>
            <person name="Allen J.E."/>
            <person name="Ambesi-Impiombato A."/>
            <person name="Apweiler R."/>
            <person name="Aturaliya R.N."/>
            <person name="Bailey T.L."/>
            <person name="Bansal M."/>
            <person name="Baxter L."/>
            <person name="Beisel K.W."/>
            <person name="Bersano T."/>
            <person name="Bono H."/>
            <person name="Chalk A.M."/>
            <person name="Chiu K.P."/>
            <person name="Choudhary V."/>
            <person name="Christoffels A."/>
            <person name="Clutterbuck D.R."/>
            <person name="Crowe M.L."/>
            <person name="Dalla E."/>
            <person name="Dalrymple B.P."/>
            <person name="de Bono B."/>
            <person name="Della Gatta G."/>
            <person name="di Bernardo D."/>
            <person name="Down T."/>
            <person name="Engstrom P."/>
            <person name="Fagiolini M."/>
            <person name="Faulkner G."/>
            <person name="Fletcher C.F."/>
            <person name="Fukushima T."/>
            <person name="Furuno M."/>
            <person name="Futaki S."/>
            <person name="Gariboldi M."/>
            <person name="Georgii-Hemming P."/>
            <person name="Gingeras T.R."/>
            <person name="Gojobori T."/>
            <person name="Green R.E."/>
            <person name="Gustincich S."/>
            <person name="Harbers M."/>
            <person name="Hayashi Y."/>
            <person name="Hensch T.K."/>
            <person name="Hirokawa N."/>
            <person name="Hill D."/>
            <person name="Huminiecki L."/>
            <person name="Iacono M."/>
            <person name="Ikeo K."/>
            <person name="Iwama A."/>
            <person name="Ishikawa T."/>
            <person name="Jakt M."/>
            <person name="Kanapin A."/>
            <person name="Katoh M."/>
            <person name="Kawasawa Y."/>
            <person name="Kelso J."/>
            <person name="Kitamura H."/>
            <person name="Kitano H."/>
            <person name="Kollias G."/>
            <person name="Krishnan S.P."/>
            <person name="Kruger A."/>
            <person name="Kummerfeld S.K."/>
            <person name="Kurochkin I.V."/>
            <person name="Lareau L.F."/>
            <person name="Lazarevic D."/>
            <person name="Lipovich L."/>
            <person name="Liu J."/>
            <person name="Liuni S."/>
            <person name="McWilliam S."/>
            <person name="Madan Babu M."/>
            <person name="Madera M."/>
            <person name="Marchionni L."/>
            <person name="Matsuda H."/>
            <person name="Matsuzawa S."/>
            <person name="Miki H."/>
            <person name="Mignone F."/>
            <person name="Miyake S."/>
            <person name="Morris K."/>
            <person name="Mottagui-Tabar S."/>
            <person name="Mulder N."/>
            <person name="Nakano N."/>
            <person name="Nakauchi H."/>
            <person name="Ng P."/>
            <person name="Nilsson R."/>
            <person name="Nishiguchi S."/>
            <person name="Nishikawa S."/>
            <person name="Nori F."/>
            <person name="Ohara O."/>
            <person name="Okazaki Y."/>
            <person name="Orlando V."/>
            <person name="Pang K.C."/>
            <person name="Pavan W.J."/>
            <person name="Pavesi G."/>
            <person name="Pesole G."/>
            <person name="Petrovsky N."/>
            <person name="Piazza S."/>
            <person name="Reed J."/>
            <person name="Reid J.F."/>
            <person name="Ring B.Z."/>
            <person name="Ringwald M."/>
            <person name="Rost B."/>
            <person name="Ruan Y."/>
            <person name="Salzberg S.L."/>
            <person name="Sandelin A."/>
            <person name="Schneider C."/>
            <person name="Schoenbach C."/>
            <person name="Sekiguchi K."/>
            <person name="Semple C.A."/>
            <person name="Seno S."/>
            <person name="Sessa L."/>
            <person name="Sheng Y."/>
            <person name="Shibata Y."/>
            <person name="Shimada H."/>
            <person name="Shimada K."/>
            <person name="Silva D."/>
            <person name="Sinclair B."/>
            <person name="Sperling S."/>
            <person name="Stupka E."/>
            <person name="Sugiura K."/>
            <person name="Sultana R."/>
            <person name="Takenaka Y."/>
            <person name="Taki K."/>
            <person name="Tammoja K."/>
            <person name="Tan S.L."/>
            <person name="Tang S."/>
            <person name="Taylor M.S."/>
            <person name="Tegner J."/>
            <person name="Teichmann S.A."/>
            <person name="Ueda H.R."/>
            <person name="van Nimwegen E."/>
            <person name="Verardo R."/>
            <person name="Wei C.L."/>
            <person name="Yagi K."/>
            <person name="Yamanishi H."/>
            <person name="Zabarovsky E."/>
            <person name="Zhu S."/>
            <person name="Zimmer A."/>
            <person name="Hide W."/>
            <person name="Bult C."/>
            <person name="Grimmond S.M."/>
            <person name="Teasdale R.D."/>
            <person name="Liu E.T."/>
            <person name="Brusic V."/>
            <person name="Quackenbush J."/>
            <person name="Wahlestedt C."/>
            <person name="Mattick J.S."/>
            <person name="Hume D.A."/>
            <person name="Kai C."/>
            <person name="Sasaki D."/>
            <person name="Tomaru Y."/>
            <person name="Fukuda S."/>
            <person name="Kanamori-Katayama M."/>
            <person name="Suzuki M."/>
            <person name="Aoki J."/>
            <person name="Arakawa T."/>
            <person name="Iida J."/>
            <person name="Imamura K."/>
            <person name="Itoh M."/>
            <person name="Kato T."/>
            <person name="Kawaji H."/>
            <person name="Kawagashira N."/>
            <person name="Kawashima T."/>
            <person name="Kojima M."/>
            <person name="Kondo S."/>
            <person name="Konno H."/>
            <person name="Nakano K."/>
            <person name="Ninomiya N."/>
            <person name="Nishio T."/>
            <person name="Okada M."/>
            <person name="Plessy C."/>
            <person name="Shibata K."/>
            <person name="Shiraki T."/>
            <person name="Suzuki S."/>
            <person name="Tagami M."/>
            <person name="Waki K."/>
            <person name="Watahiki A."/>
            <person name="Okamura-Oho Y."/>
            <person name="Suzuki H."/>
            <person name="Kawai J."/>
            <person name="Hayashizaki Y."/>
        </authorList>
    </citation>
    <scope>NUCLEOTIDE SEQUENCE [LARGE SCALE MRNA]</scope>
    <source>
        <strain>C57BL/6J</strain>
    </source>
</reference>
<reference key="4">
    <citation type="submission" date="2005-09" db="EMBL/GenBank/DDBJ databases">
        <authorList>
            <person name="Mural R.J."/>
            <person name="Adams M.D."/>
            <person name="Myers E.W."/>
            <person name="Smith H.O."/>
            <person name="Venter J.C."/>
        </authorList>
    </citation>
    <scope>NUCLEOTIDE SEQUENCE [LARGE SCALE GENOMIC DNA]</scope>
</reference>
<reference key="5">
    <citation type="journal article" date="2004" name="Genome Res.">
        <title>The status, quality, and expansion of the NIH full-length cDNA project: the Mammalian Gene Collection (MGC).</title>
        <authorList>
            <consortium name="The MGC Project Team"/>
        </authorList>
    </citation>
    <scope>NUCLEOTIDE SEQUENCE [LARGE SCALE MRNA]</scope>
    <source>
        <tissue>Eye</tissue>
    </source>
</reference>
<reference key="6">
    <citation type="journal article" date="2007" name="Proc. Natl. Acad. Sci. U.S.A.">
        <title>Large-scale phosphorylation analysis of mouse liver.</title>
        <authorList>
            <person name="Villen J."/>
            <person name="Beausoleil S.A."/>
            <person name="Gerber S.A."/>
            <person name="Gygi S.P."/>
        </authorList>
    </citation>
    <scope>PHOSPHORYLATION [LARGE SCALE ANALYSIS] AT SER-118</scope>
    <scope>IDENTIFICATION BY MASS SPECTROMETRY [LARGE SCALE ANALYSIS]</scope>
    <source>
        <tissue>Liver</tissue>
    </source>
</reference>
<reference key="7">
    <citation type="journal article" date="2009" name="Immunity">
        <title>The phagosomal proteome in interferon-gamma-activated macrophages.</title>
        <authorList>
            <person name="Trost M."/>
            <person name="English L."/>
            <person name="Lemieux S."/>
            <person name="Courcelles M."/>
            <person name="Desjardins M."/>
            <person name="Thibault P."/>
        </authorList>
    </citation>
    <scope>PHOSPHORYLATION [LARGE SCALE ANALYSIS] AT SER-118; SER-144; SER-181; SER-192; SER-218; SER-243 AND SER-244</scope>
    <scope>IDENTIFICATION BY MASS SPECTROMETRY [LARGE SCALE ANALYSIS]</scope>
</reference>
<reference key="8">
    <citation type="journal article" date="2009" name="Mol. Cell. Proteomics">
        <title>Large scale localization of protein phosphorylation by use of electron capture dissociation mass spectrometry.</title>
        <authorList>
            <person name="Sweet S.M."/>
            <person name="Bailey C.M."/>
            <person name="Cunningham D.L."/>
            <person name="Heath J.K."/>
            <person name="Cooper H.J."/>
        </authorList>
    </citation>
    <scope>PHOSPHORYLATION [LARGE SCALE ANALYSIS] AT SER-118 AND SER-155</scope>
    <scope>IDENTIFICATION BY MASS SPECTROMETRY [LARGE SCALE ANALYSIS]</scope>
    <source>
        <tissue>Embryonic fibroblast</tissue>
    </source>
</reference>
<reference key="9">
    <citation type="journal article" date="2010" name="Cell">
        <title>A tissue-specific atlas of mouse protein phosphorylation and expression.</title>
        <authorList>
            <person name="Huttlin E.L."/>
            <person name="Jedrychowski M.P."/>
            <person name="Elias J.E."/>
            <person name="Goswami T."/>
            <person name="Rad R."/>
            <person name="Beausoleil S.A."/>
            <person name="Villen J."/>
            <person name="Haas W."/>
            <person name="Sowa M.E."/>
            <person name="Gygi S.P."/>
        </authorList>
    </citation>
    <scope>PHOSPHORYLATION [LARGE SCALE ANALYSIS] AT SER-118; SER-236 AND SER-245</scope>
    <scope>IDENTIFICATION BY MASS SPECTROMETRY [LARGE SCALE ANALYSIS]</scope>
    <source>
        <tissue>Brain</tissue>
        <tissue>Brown adipose tissue</tissue>
        <tissue>Heart</tissue>
        <tissue>Kidney</tissue>
        <tissue>Liver</tissue>
        <tissue>Lung</tissue>
        <tissue>Pancreas</tissue>
        <tissue>Spleen</tissue>
        <tissue>Testis</tissue>
    </source>
</reference>
<reference key="10">
    <citation type="journal article" date="2011" name="Immunity">
        <title>DDX1, DDX21, and DHX36 helicases form a complex with the adaptor molecule TRIF to sense dsRNA in dendritic cells.</title>
        <authorList>
            <person name="Zhang Z."/>
            <person name="Kim T."/>
            <person name="Bao M."/>
            <person name="Facchinetti V."/>
            <person name="Jung S.Y."/>
            <person name="Ghaffari A.A."/>
            <person name="Qin J."/>
            <person name="Cheng G."/>
            <person name="Liu Y.J."/>
        </authorList>
    </citation>
    <scope>FUNCTION</scope>
    <scope>INTERACTION WITH TICAM1; DDX1 AND DHX36</scope>
    <scope>IDENTIFICATION IN A COMPLEX WITH DDX1; DHX36 AND TICAM1</scope>
    <scope>SUBUNIT</scope>
    <scope>SUBCELLULAR LOCATION</scope>
    <scope>IDENTIFICATION BY MASS SPECTROMETRY</scope>
</reference>
<reference key="11">
    <citation type="journal article" date="2013" name="Mol. Cell">
        <title>SIRT5-mediated lysine desuccinylation impacts diverse metabolic pathways.</title>
        <authorList>
            <person name="Park J."/>
            <person name="Chen Y."/>
            <person name="Tishkoff D.X."/>
            <person name="Peng C."/>
            <person name="Tan M."/>
            <person name="Dai L."/>
            <person name="Xie Z."/>
            <person name="Zhang Y."/>
            <person name="Zwaans B.M."/>
            <person name="Skinner M.E."/>
            <person name="Lombard D.B."/>
            <person name="Zhao Y."/>
        </authorList>
    </citation>
    <scope>ACETYLATION [LARGE SCALE ANALYSIS] AT LYS-39</scope>
    <scope>IDENTIFICATION BY MASS SPECTROMETRY [LARGE SCALE ANALYSIS]</scope>
    <source>
        <tissue>Embryonic fibroblast</tissue>
    </source>
</reference>
<reference key="12">
    <citation type="journal article" date="2019" name="Mol. Cell">
        <title>RNA Targets Ribogenesis Factor WDR43 to Chromatin for Transcription and Pluripotency Control.</title>
        <authorList>
            <person name="Bi X."/>
            <person name="Xu Y."/>
            <person name="Li T."/>
            <person name="Li X."/>
            <person name="Li W."/>
            <person name="Shao W."/>
            <person name="Wang K."/>
            <person name="Zhan G."/>
            <person name="Wu Z."/>
            <person name="Liu W."/>
            <person name="Lu J.Y."/>
            <person name="Wang L."/>
            <person name="Zhao J."/>
            <person name="Wu J."/>
            <person name="Na J."/>
            <person name="Li G."/>
            <person name="Li P."/>
            <person name="Shen X."/>
        </authorList>
    </citation>
    <scope>INTERACTION WITH WDR43</scope>
</reference>
<dbReference type="EC" id="3.6.4.13" evidence="2"/>
<dbReference type="EMBL" id="AF220365">
    <property type="protein sequence ID" value="AAF61690.1"/>
    <property type="molecule type" value="Genomic_DNA"/>
</dbReference>
<dbReference type="EMBL" id="AF159131">
    <property type="protein sequence ID" value="AAD43959.3"/>
    <property type="molecule type" value="mRNA"/>
</dbReference>
<dbReference type="EMBL" id="AK160095">
    <property type="protein sequence ID" value="BAE35625.1"/>
    <property type="molecule type" value="mRNA"/>
</dbReference>
<dbReference type="EMBL" id="CH466553">
    <property type="protein sequence ID" value="EDL32086.1"/>
    <property type="molecule type" value="Genomic_DNA"/>
</dbReference>
<dbReference type="EMBL" id="BC043655">
    <property type="protein sequence ID" value="AAH43655.1"/>
    <property type="molecule type" value="mRNA"/>
</dbReference>
<dbReference type="CCDS" id="CCDS23891.1"/>
<dbReference type="RefSeq" id="NP_062426.2">
    <property type="nucleotide sequence ID" value="NM_019553.2"/>
</dbReference>
<dbReference type="PDB" id="3ZIN">
    <property type="method" value="X-ray"/>
    <property type="resolution" value="2.00 A"/>
    <property type="chains" value="B/C=839-851"/>
</dbReference>
<dbReference type="PDBsum" id="3ZIN"/>
<dbReference type="SMR" id="Q9JIK5"/>
<dbReference type="BioGRID" id="207838">
    <property type="interactions" value="19"/>
</dbReference>
<dbReference type="ComplexPortal" id="CPX-1133">
    <property type="entry name" value="B-WICH chromatin remodelling complex"/>
</dbReference>
<dbReference type="CORUM" id="Q9JIK5"/>
<dbReference type="DIP" id="DIP-48574N"/>
<dbReference type="FunCoup" id="Q9JIK5">
    <property type="interactions" value="4196"/>
</dbReference>
<dbReference type="IntAct" id="Q9JIK5">
    <property type="interactions" value="6"/>
</dbReference>
<dbReference type="MINT" id="Q9JIK5"/>
<dbReference type="STRING" id="10090.ENSMUSP00000042691"/>
<dbReference type="ChEMBL" id="CHEMBL4879519"/>
<dbReference type="GlyGen" id="Q9JIK5">
    <property type="glycosylation" value="1 site, 1 O-linked glycan (1 site)"/>
</dbReference>
<dbReference type="iPTMnet" id="Q9JIK5"/>
<dbReference type="PhosphoSitePlus" id="Q9JIK5"/>
<dbReference type="SwissPalm" id="Q9JIK5"/>
<dbReference type="jPOST" id="Q9JIK5"/>
<dbReference type="PaxDb" id="10090-ENSMUSP00000042691"/>
<dbReference type="PeptideAtlas" id="Q9JIK5"/>
<dbReference type="ProteomicsDB" id="279324"/>
<dbReference type="Pumba" id="Q9JIK5"/>
<dbReference type="Antibodypedia" id="14684">
    <property type="antibodies" value="281 antibodies from 27 providers"/>
</dbReference>
<dbReference type="DNASU" id="56200"/>
<dbReference type="Ensembl" id="ENSMUST00000045866.9">
    <property type="protein sequence ID" value="ENSMUSP00000042691.8"/>
    <property type="gene ID" value="ENSMUSG00000020075.9"/>
</dbReference>
<dbReference type="GeneID" id="56200"/>
<dbReference type="KEGG" id="mmu:56200"/>
<dbReference type="UCSC" id="uc007fhn.1">
    <property type="organism name" value="mouse"/>
</dbReference>
<dbReference type="AGR" id="MGI:1860494"/>
<dbReference type="CTD" id="9188"/>
<dbReference type="MGI" id="MGI:1860494">
    <property type="gene designation" value="Ddx21"/>
</dbReference>
<dbReference type="VEuPathDB" id="HostDB:ENSMUSG00000020075"/>
<dbReference type="eggNOG" id="KOG0331">
    <property type="taxonomic scope" value="Eukaryota"/>
</dbReference>
<dbReference type="GeneTree" id="ENSGT00940000155043"/>
<dbReference type="HOGENOM" id="CLU_003041_20_0_1"/>
<dbReference type="InParanoid" id="Q9JIK5"/>
<dbReference type="OMA" id="YSGFHGR"/>
<dbReference type="OrthoDB" id="4255at2759"/>
<dbReference type="PhylomeDB" id="Q9JIK5"/>
<dbReference type="TreeFam" id="TF328622"/>
<dbReference type="Reactome" id="R-MMU-5250924">
    <property type="pathway name" value="B-WICH complex positively regulates rRNA expression"/>
</dbReference>
<dbReference type="Reactome" id="R-MMU-6791226">
    <property type="pathway name" value="Major pathway of rRNA processing in the nucleolus and cytosol"/>
</dbReference>
<dbReference type="BioGRID-ORCS" id="56200">
    <property type="hits" value="26 hits in 82 CRISPR screens"/>
</dbReference>
<dbReference type="ChiTaRS" id="Ddx21">
    <property type="organism name" value="mouse"/>
</dbReference>
<dbReference type="EvolutionaryTrace" id="Q9JIK5"/>
<dbReference type="PRO" id="PR:Q9JIK5"/>
<dbReference type="Proteomes" id="UP000000589">
    <property type="component" value="Chromosome 10"/>
</dbReference>
<dbReference type="RNAct" id="Q9JIK5">
    <property type="molecule type" value="protein"/>
</dbReference>
<dbReference type="Bgee" id="ENSMUSG00000020075">
    <property type="expression patterns" value="Expressed in epiblast (generic) and 278 other cell types or tissues"/>
</dbReference>
<dbReference type="GO" id="GO:0110016">
    <property type="term" value="C:B-WICH complex"/>
    <property type="evidence" value="ECO:0000266"/>
    <property type="project" value="ComplexPortal"/>
</dbReference>
<dbReference type="GO" id="GO:0005829">
    <property type="term" value="C:cytosol"/>
    <property type="evidence" value="ECO:0000314"/>
    <property type="project" value="UniProtKB"/>
</dbReference>
<dbReference type="GO" id="GO:0005739">
    <property type="term" value="C:mitochondrion"/>
    <property type="evidence" value="ECO:0000303"/>
    <property type="project" value="UniProtKB"/>
</dbReference>
<dbReference type="GO" id="GO:0005730">
    <property type="term" value="C:nucleolus"/>
    <property type="evidence" value="ECO:0000250"/>
    <property type="project" value="UniProtKB"/>
</dbReference>
<dbReference type="GO" id="GO:0005654">
    <property type="term" value="C:nucleoplasm"/>
    <property type="evidence" value="ECO:0000250"/>
    <property type="project" value="UniProtKB"/>
</dbReference>
<dbReference type="GO" id="GO:0005634">
    <property type="term" value="C:nucleus"/>
    <property type="evidence" value="ECO:0000250"/>
    <property type="project" value="MGI"/>
</dbReference>
<dbReference type="GO" id="GO:0097322">
    <property type="term" value="F:7SK snRNA binding"/>
    <property type="evidence" value="ECO:0000250"/>
    <property type="project" value="UniProtKB"/>
</dbReference>
<dbReference type="GO" id="GO:0005524">
    <property type="term" value="F:ATP binding"/>
    <property type="evidence" value="ECO:0007669"/>
    <property type="project" value="UniProtKB-KW"/>
</dbReference>
<dbReference type="GO" id="GO:0016887">
    <property type="term" value="F:ATP hydrolysis activity"/>
    <property type="evidence" value="ECO:0007669"/>
    <property type="project" value="RHEA"/>
</dbReference>
<dbReference type="GO" id="GO:0003725">
    <property type="term" value="F:double-stranded RNA binding"/>
    <property type="evidence" value="ECO:0000314"/>
    <property type="project" value="MGI"/>
</dbReference>
<dbReference type="GO" id="GO:0042802">
    <property type="term" value="F:identical protein binding"/>
    <property type="evidence" value="ECO:0000314"/>
    <property type="project" value="UniProtKB"/>
</dbReference>
<dbReference type="GO" id="GO:0035198">
    <property type="term" value="F:miRNA binding"/>
    <property type="evidence" value="ECO:0000250"/>
    <property type="project" value="UniProtKB"/>
</dbReference>
<dbReference type="GO" id="GO:0003723">
    <property type="term" value="F:RNA binding"/>
    <property type="evidence" value="ECO:0000250"/>
    <property type="project" value="MGI"/>
</dbReference>
<dbReference type="GO" id="GO:0003724">
    <property type="term" value="F:RNA helicase activity"/>
    <property type="evidence" value="ECO:0000250"/>
    <property type="project" value="UniProtKB"/>
</dbReference>
<dbReference type="GO" id="GO:0019843">
    <property type="term" value="F:rRNA binding"/>
    <property type="evidence" value="ECO:0000250"/>
    <property type="project" value="UniProtKB"/>
</dbReference>
<dbReference type="GO" id="GO:0030515">
    <property type="term" value="F:snoRNA binding"/>
    <property type="evidence" value="ECO:0000250"/>
    <property type="project" value="UniProtKB"/>
</dbReference>
<dbReference type="GO" id="GO:0006338">
    <property type="term" value="P:chromatin remodeling"/>
    <property type="evidence" value="ECO:0000303"/>
    <property type="project" value="ComplexPortal"/>
</dbReference>
<dbReference type="GO" id="GO:0051607">
    <property type="term" value="P:defense response to virus"/>
    <property type="evidence" value="ECO:0007669"/>
    <property type="project" value="UniProtKB-KW"/>
</dbReference>
<dbReference type="GO" id="GO:0045087">
    <property type="term" value="P:innate immune response"/>
    <property type="evidence" value="ECO:0007669"/>
    <property type="project" value="UniProtKB-KW"/>
</dbReference>
<dbReference type="GO" id="GO:0043123">
    <property type="term" value="P:positive regulation of canonical NF-kappaB signal transduction"/>
    <property type="evidence" value="ECO:0000315"/>
    <property type="project" value="UniProtKB"/>
</dbReference>
<dbReference type="GO" id="GO:0002735">
    <property type="term" value="P:positive regulation of myeloid dendritic cell cytokine production"/>
    <property type="evidence" value="ECO:0000315"/>
    <property type="project" value="UniProtKB"/>
</dbReference>
<dbReference type="GO" id="GO:0045943">
    <property type="term" value="P:positive regulation of transcription by RNA polymerase I"/>
    <property type="evidence" value="ECO:0000303"/>
    <property type="project" value="ComplexPortal"/>
</dbReference>
<dbReference type="GO" id="GO:0045944">
    <property type="term" value="P:positive regulation of transcription by RNA polymerase II"/>
    <property type="evidence" value="ECO:0000303"/>
    <property type="project" value="ComplexPortal"/>
</dbReference>
<dbReference type="GO" id="GO:0045945">
    <property type="term" value="P:positive regulation of transcription by RNA polymerase III"/>
    <property type="evidence" value="ECO:0000266"/>
    <property type="project" value="ComplexPortal"/>
</dbReference>
<dbReference type="GO" id="GO:0062176">
    <property type="term" value="P:R-loop processing"/>
    <property type="evidence" value="ECO:0000250"/>
    <property type="project" value="UniProtKB"/>
</dbReference>
<dbReference type="GO" id="GO:0043330">
    <property type="term" value="P:response to exogenous dsRNA"/>
    <property type="evidence" value="ECO:0000315"/>
    <property type="project" value="MGI"/>
</dbReference>
<dbReference type="GO" id="GO:0009615">
    <property type="term" value="P:response to virus"/>
    <property type="evidence" value="ECO:0000315"/>
    <property type="project" value="MGI"/>
</dbReference>
<dbReference type="GO" id="GO:0006364">
    <property type="term" value="P:rRNA processing"/>
    <property type="evidence" value="ECO:0007669"/>
    <property type="project" value="UniProtKB-KW"/>
</dbReference>
<dbReference type="GO" id="GO:0006366">
    <property type="term" value="P:transcription by RNA polymerase II"/>
    <property type="evidence" value="ECO:0000250"/>
    <property type="project" value="UniProtKB"/>
</dbReference>
<dbReference type="CDD" id="cd17944">
    <property type="entry name" value="DEADc_DDX21_DDX50"/>
    <property type="match status" value="1"/>
</dbReference>
<dbReference type="CDD" id="cd12936">
    <property type="entry name" value="GUCT_RHII_Gualpha_beta"/>
    <property type="match status" value="1"/>
</dbReference>
<dbReference type="CDD" id="cd18787">
    <property type="entry name" value="SF2_C_DEAD"/>
    <property type="match status" value="1"/>
</dbReference>
<dbReference type="FunFam" id="3.40.50.300:FF:000666">
    <property type="entry name" value="ATP-dependent RNA helicase DDX50"/>
    <property type="match status" value="1"/>
</dbReference>
<dbReference type="FunFam" id="3.30.70.2280:FF:000002">
    <property type="entry name" value="Nucleolar RNA helicase 2"/>
    <property type="match status" value="1"/>
</dbReference>
<dbReference type="FunFam" id="3.40.50.300:FF:001168">
    <property type="entry name" value="nucleolar RNA helicase 2"/>
    <property type="match status" value="1"/>
</dbReference>
<dbReference type="Gene3D" id="3.30.70.2280">
    <property type="match status" value="1"/>
</dbReference>
<dbReference type="Gene3D" id="3.40.50.300">
    <property type="entry name" value="P-loop containing nucleotide triphosphate hydrolases"/>
    <property type="match status" value="2"/>
</dbReference>
<dbReference type="IDEAL" id="IID50235"/>
<dbReference type="InterPro" id="IPR011545">
    <property type="entry name" value="DEAD/DEAH_box_helicase_dom"/>
</dbReference>
<dbReference type="InterPro" id="IPR050079">
    <property type="entry name" value="DEAD_box_RNA_helicase"/>
</dbReference>
<dbReference type="InterPro" id="IPR012562">
    <property type="entry name" value="GUCT"/>
</dbReference>
<dbReference type="InterPro" id="IPR014001">
    <property type="entry name" value="Helicase_ATP-bd"/>
</dbReference>
<dbReference type="InterPro" id="IPR001650">
    <property type="entry name" value="Helicase_C-like"/>
</dbReference>
<dbReference type="InterPro" id="IPR027417">
    <property type="entry name" value="P-loop_NTPase"/>
</dbReference>
<dbReference type="InterPro" id="IPR035979">
    <property type="entry name" value="RBD_domain_sf"/>
</dbReference>
<dbReference type="PANTHER" id="PTHR47959">
    <property type="entry name" value="ATP-DEPENDENT RNA HELICASE RHLE-RELATED"/>
    <property type="match status" value="1"/>
</dbReference>
<dbReference type="PANTHER" id="PTHR47959:SF19">
    <property type="entry name" value="NUCLEOLAR RNA HELICASE 2-A"/>
    <property type="match status" value="1"/>
</dbReference>
<dbReference type="Pfam" id="PF00270">
    <property type="entry name" value="DEAD"/>
    <property type="match status" value="1"/>
</dbReference>
<dbReference type="Pfam" id="PF08152">
    <property type="entry name" value="GUCT"/>
    <property type="match status" value="1"/>
</dbReference>
<dbReference type="Pfam" id="PF00271">
    <property type="entry name" value="Helicase_C"/>
    <property type="match status" value="1"/>
</dbReference>
<dbReference type="SMART" id="SM00487">
    <property type="entry name" value="DEXDc"/>
    <property type="match status" value="1"/>
</dbReference>
<dbReference type="SMART" id="SM00490">
    <property type="entry name" value="HELICc"/>
    <property type="match status" value="1"/>
</dbReference>
<dbReference type="SUPFAM" id="SSF52540">
    <property type="entry name" value="P-loop containing nucleoside triphosphate hydrolases"/>
    <property type="match status" value="1"/>
</dbReference>
<dbReference type="SUPFAM" id="SSF54928">
    <property type="entry name" value="RNA-binding domain, RBD"/>
    <property type="match status" value="1"/>
</dbReference>
<dbReference type="PROSITE" id="PS51192">
    <property type="entry name" value="HELICASE_ATP_BIND_1"/>
    <property type="match status" value="1"/>
</dbReference>
<dbReference type="PROSITE" id="PS51194">
    <property type="entry name" value="HELICASE_CTER"/>
    <property type="match status" value="1"/>
</dbReference>
<dbReference type="PROSITE" id="PS51195">
    <property type="entry name" value="Q_MOTIF"/>
    <property type="match status" value="1"/>
</dbReference>
<comment type="function">
    <text evidence="2 8">RNA helicase that acts as a sensor of the transcriptional status of both RNA polymerase (Pol) I and II: promotes ribosomal RNA (rRNA) processing and transcription from polymerase II (Pol II) (By similarity). Binds various RNAs, such as rRNAs, snoRNAs, 7SK and, at lower extent, mRNAs (By similarity). In the nucleolus, localizes to rDNA locus, where it directly binds rRNAs and snoRNAs, and promotes rRNA transcription, processing and modification (By similarity). Required for rRNA 2'-O-methylation, possibly by promoting the recruitment of late-acting snoRNAs SNORD56 and SNORD58 with pre-ribosomal complexes (By similarity). In the nucleoplasm, binds 7SK RNA and is recruited to the promoters of Pol II-transcribed genes: acts by facilitating the release of P-TEFb from inhibitory 7SK snRNP in a manner that is dependent on its helicase activity, thereby promoting transcription of its target genes (By similarity). Functions as cofactor for JUN-activated transcription: required for phosphorylation of JUN at 'Ser-77' (By similarity). Can unwind double-stranded RNA (helicase) and can fold or introduce a secondary structure to a single-stranded RNA (foldase) (By similarity). Together with SIRT7, required to prevent R-loop-associated DNA damage and transcription-associated genomic instability: deacetylation by SIRT7 activates the helicase activity, thereby overcoming R-loop-mediated stalling of RNA polymerases (By similarity). Involved in rRNA processing. May bind to specific miRNA hairpins (By similarity). Component of a multi-helicase-TICAM1 complex that acts as a cytoplasmic sensor of viral double-stranded RNA (dsRNA) and plays a role in the activation of a cascade of antiviral responses including the induction of pro-inflammatory cytokines via the adapter molecule TICAM1 (PubMed:21703541).</text>
</comment>
<comment type="catalytic activity">
    <reaction evidence="2">
        <text>ATP + H2O = ADP + phosphate + H(+)</text>
        <dbReference type="Rhea" id="RHEA:13065"/>
        <dbReference type="ChEBI" id="CHEBI:15377"/>
        <dbReference type="ChEBI" id="CHEBI:15378"/>
        <dbReference type="ChEBI" id="CHEBI:30616"/>
        <dbReference type="ChEBI" id="CHEBI:43474"/>
        <dbReference type="ChEBI" id="CHEBI:456216"/>
        <dbReference type="EC" id="3.6.4.13"/>
    </reaction>
    <physiologicalReaction direction="left-to-right" evidence="2">
        <dbReference type="Rhea" id="RHEA:13066"/>
    </physiologicalReaction>
</comment>
<comment type="activity regulation">
    <text evidence="2">Acetylation inhibits the helicase activity.</text>
</comment>
<comment type="subunit">
    <text evidence="2 8 9">Homodimer; homodimerizes via its N-terminus (PubMed:21703541). Found in a multi-helicase-TICAM1 complex at least composed of DHX36, DDX1, DDX21 and TICAM1; this complex exists in resting cells with or without poly(I:C) RNA ligand stimulation (PubMed:21703541). Interacts (via C-terminus) with TICAM1 (via TIR domain) (PubMed:21703541). Interacts with DHX36 (via C-terminus); this interaction serves as bridges to TICAM1 (PubMed:21703541). Interacts (via C-terminus) with DDX1 (via B30.2/SPRY domain); this interaction serves as bridges to TICAM1 (PubMed:21703541). Component of the B-WICH complex, at least composed of SMARCA5/SNF2H, BAZ1B/WSTF, SF3B1, DEK, MYO1C, ERCC6, MYBBP1A and DDX21. Interacts with C1QBP. Interacts with JUN. Interacts with WDR46. Interacts with MCM3AP (By similarity). Interacts with WDR43 (PubMed:31128943). Interacts with KPNA3 (By similarity). Interacts with GID4 (By similarity).</text>
</comment>
<comment type="subcellular location">
    <subcellularLocation>
        <location evidence="2">Nucleus</location>
        <location evidence="2">Nucleolus</location>
    </subcellularLocation>
    <subcellularLocation>
        <location evidence="2">Nucleus</location>
        <location evidence="2">Nucleoplasm</location>
    </subcellularLocation>
    <subcellularLocation>
        <location evidence="8">Cytoplasm</location>
        <location evidence="8">Cytosol</location>
    </subcellularLocation>
    <subcellularLocation>
        <location evidence="10">Mitochondrion</location>
    </subcellularLocation>
    <text evidence="2 8">Present both in nucleolus and nucleoplasm. Interaction with JUN promotes translocation from the nucleolus to the nucleoplasm. Interaction with WDR46 is required for localization to the nucleolus. Colocalizes in the cytosol with DDX1, DHX36 and TICAM1 (PubMed:21703541). The multi-helicase-TICAM1 complex may translocate to the mitochondria upon poly(I:C) RNA ligand stimulation (PubMed:21703541).</text>
</comment>
<comment type="tissue specificity">
    <text evidence="7">Highly expressed in liver and testis. Expressed at lower level in brain, lungs, and skeletal muscle.</text>
</comment>
<comment type="domain">
    <text evidence="2">The helicase and foldase activities reside in two separate domains, the helicase in the N-terminus and the foldase in the C-terminus.</text>
</comment>
<comment type="domain">
    <text evidence="1">The 3 X 5 AA repeats seem to be critical for the RNA folding activity.</text>
</comment>
<comment type="PTM">
    <text evidence="2">Acetylation by CREBBP/CBP inhibits the helicase activity. Deacetylation by SIRT7 promotes the helicase activity and overcomes R-loop-mediated stalling of RNA polymerases.</text>
</comment>
<comment type="similarity">
    <text evidence="11">Belongs to the DEAD box helicase family. DDX21/DDX50 subfamily.</text>
</comment>
<accession>Q9JIK5</accession>
<accession>Q3TVJ3</accession>
<accession>Q9WV45</accession>
<feature type="chain" id="PRO_0000055028" description="Nucleolar RNA helicase 2">
    <location>
        <begin position="1"/>
        <end position="851"/>
    </location>
</feature>
<feature type="repeat" description="1-1">
    <location>
        <begin position="117"/>
        <end position="153"/>
    </location>
</feature>
<feature type="repeat" description="1-2">
    <location>
        <begin position="154"/>
        <end position="190"/>
    </location>
</feature>
<feature type="repeat" description="1-3">
    <location>
        <begin position="191"/>
        <end position="227"/>
    </location>
</feature>
<feature type="domain" description="Helicase ATP-binding" evidence="3">
    <location>
        <begin position="289"/>
        <end position="468"/>
    </location>
</feature>
<feature type="domain" description="Helicase C-terminal" evidence="4">
    <location>
        <begin position="501"/>
        <end position="645"/>
    </location>
</feature>
<feature type="repeat" description="2-1">
    <location>
        <begin position="807"/>
        <end position="811"/>
    </location>
</feature>
<feature type="repeat" description="2-2">
    <location>
        <begin position="817"/>
        <end position="823"/>
    </location>
</feature>
<feature type="repeat" description="2-3">
    <location>
        <begin position="829"/>
        <end position="833"/>
    </location>
</feature>
<feature type="region of interest" description="Disordered" evidence="6">
    <location>
        <begin position="1"/>
        <end position="260"/>
    </location>
</feature>
<feature type="region of interest" description="3 X 37 AA tandem repeats">
    <location>
        <begin position="117"/>
        <end position="227"/>
    </location>
</feature>
<feature type="region of interest" description="Disordered" evidence="6">
    <location>
        <begin position="783"/>
        <end position="851"/>
    </location>
</feature>
<feature type="region of interest" description="3 X 5 AA repeats">
    <location>
        <begin position="807"/>
        <end position="833"/>
    </location>
</feature>
<feature type="short sequence motif" description="Q motif" evidence="5">
    <location>
        <begin position="258"/>
        <end position="286"/>
    </location>
</feature>
<feature type="short sequence motif" description="DEAD box" evidence="3">
    <location>
        <begin position="411"/>
        <end position="414"/>
    </location>
</feature>
<feature type="compositionally biased region" description="Basic and acidic residues" evidence="6">
    <location>
        <begin position="26"/>
        <end position="42"/>
    </location>
</feature>
<feature type="compositionally biased region" description="Basic and acidic residues" evidence="6">
    <location>
        <begin position="99"/>
        <end position="113"/>
    </location>
</feature>
<feature type="compositionally biased region" description="Basic and acidic residues" evidence="6">
    <location>
        <begin position="133"/>
        <end position="145"/>
    </location>
</feature>
<feature type="compositionally biased region" description="Basic and acidic residues" evidence="6">
    <location>
        <begin position="170"/>
        <end position="182"/>
    </location>
</feature>
<feature type="compositionally biased region" description="Basic and acidic residues" evidence="6">
    <location>
        <begin position="207"/>
        <end position="223"/>
    </location>
</feature>
<feature type="compositionally biased region" description="Polar residues" evidence="6">
    <location>
        <begin position="226"/>
        <end position="237"/>
    </location>
</feature>
<feature type="compositionally biased region" description="Basic and acidic residues" evidence="6">
    <location>
        <begin position="246"/>
        <end position="257"/>
    </location>
</feature>
<feature type="binding site" evidence="3">
    <location>
        <begin position="302"/>
        <end position="309"/>
    </location>
    <ligand>
        <name>ATP</name>
        <dbReference type="ChEBI" id="CHEBI:30616"/>
    </ligand>
</feature>
<feature type="modified residue" description="Phosphoserine" evidence="2">
    <location>
        <position position="7"/>
    </location>
</feature>
<feature type="modified residue" description="Phosphoserine" evidence="2">
    <location>
        <position position="13"/>
    </location>
</feature>
<feature type="modified residue" description="N6-acetyllysine" evidence="16">
    <location>
        <position position="39"/>
    </location>
</feature>
<feature type="modified residue" description="Phosphoserine" evidence="12 13 14 15">
    <location>
        <position position="118"/>
    </location>
</feature>
<feature type="modified residue" description="N6-acetyllysine" evidence="2">
    <location>
        <position position="134"/>
    </location>
</feature>
<feature type="modified residue" description="Phosphoserine" evidence="14">
    <location>
        <position position="144"/>
    </location>
</feature>
<feature type="modified residue" description="Phosphoserine" evidence="13">
    <location>
        <position position="155"/>
    </location>
</feature>
<feature type="modified residue" description="Phosphoserine" evidence="14">
    <location>
        <position position="181"/>
    </location>
</feature>
<feature type="modified residue" description="Phosphoserine" evidence="14">
    <location>
        <position position="192"/>
    </location>
</feature>
<feature type="modified residue" description="Phosphoserine" evidence="14">
    <location>
        <position position="218"/>
    </location>
</feature>
<feature type="modified residue" description="Phosphoserine" evidence="15">
    <location>
        <position position="236"/>
    </location>
</feature>
<feature type="modified residue" description="Phosphoserine" evidence="14">
    <location>
        <position position="243"/>
    </location>
</feature>
<feature type="modified residue" description="Phosphoserine" evidence="14">
    <location>
        <position position="244"/>
    </location>
</feature>
<feature type="modified residue" description="Phosphoserine" evidence="15">
    <location>
        <position position="245"/>
    </location>
</feature>
<feature type="modified residue" description="Phosphothreonine" evidence="2">
    <location>
        <position position="368"/>
    </location>
</feature>
<feature type="modified residue" description="Phosphoserine" evidence="2">
    <location>
        <position position="639"/>
    </location>
</feature>
<feature type="modified residue" description="N6-acetyllysine" evidence="2">
    <location>
        <position position="672"/>
    </location>
</feature>
<feature type="modified residue" description="N6-acetyllysine" evidence="2">
    <location>
        <position position="847"/>
    </location>
</feature>
<feature type="sequence conflict" description="In Ref. 1; AAF61690." evidence="11" ref="1">
    <location>
        <begin position="1"/>
        <end position="46"/>
    </location>
</feature>
<feature type="sequence conflict" description="In Ref. 1; AAD43959." evidence="11" ref="1">
    <original>P</original>
    <variation>Q</variation>
    <location>
        <position position="790"/>
    </location>
</feature>
<feature type="helix" evidence="17">
    <location>
        <begin position="845"/>
        <end position="849"/>
    </location>
</feature>